<proteinExistence type="inferred from homology"/>
<reference key="1">
    <citation type="journal article" date="2008" name="BMC Genomics">
        <title>The genome sequence of the fish pathogen Aliivibrio salmonicida strain LFI1238 shows extensive evidence of gene decay.</title>
        <authorList>
            <person name="Hjerde E."/>
            <person name="Lorentzen M.S."/>
            <person name="Holden M.T."/>
            <person name="Seeger K."/>
            <person name="Paulsen S."/>
            <person name="Bason N."/>
            <person name="Churcher C."/>
            <person name="Harris D."/>
            <person name="Norbertczak H."/>
            <person name="Quail M.A."/>
            <person name="Sanders S."/>
            <person name="Thurston S."/>
            <person name="Parkhill J."/>
            <person name="Willassen N.P."/>
            <person name="Thomson N.R."/>
        </authorList>
    </citation>
    <scope>NUCLEOTIDE SEQUENCE [LARGE SCALE GENOMIC DNA]</scope>
    <source>
        <strain>LFI1238</strain>
    </source>
</reference>
<sequence length="500" mass="56061">MIPVVALVGRPNVGKSTLFNRVTRTRDALVADFPGLTRDRKYGRAKLEEQEFILIDTGGIDGTEEGVETKMAEQSLAAIEEADVVLFMVDGRAGLTSSDEAIAKHLRSREKPTFLVVNKIDGIDADAASAEFWQLGMSKVYQIAASHGRGVTSLLELALAPFMEELVEESLRDENGEITDLTEFEDFEDEEKDLTEEDAEKDFARLQDQPIKLAIIGRPNVGKSTLINRILGEERVVVYDMPGTTRDSIYIPMEREGQEYVLIDTAGVRRRGRINETVEKFSVIKTLKAIEDANVVLLVIDARENISDQDLSLLGFALNAGRSLVIAVNKWDGLNNEVKEKVKSELDRRLGFVDFARLHFISALHGTGVGHLYESVQEAYVSATKRVGTSVLTRVMKMAQDDHQPPMVRGRRVKLKYAHAGGYNPPLIVIHGNQVKELPSSYKRFLMNYFRKSLEIMGTPIRIQFQNSENPFEDRGGKLTLSQERQRKRLVGAVKNRNKK</sequence>
<accession>B6EGZ1</accession>
<dbReference type="EMBL" id="FM178379">
    <property type="protein sequence ID" value="CAQ78418.1"/>
    <property type="molecule type" value="Genomic_DNA"/>
</dbReference>
<dbReference type="RefSeq" id="WP_012549538.1">
    <property type="nucleotide sequence ID" value="NC_011312.1"/>
</dbReference>
<dbReference type="SMR" id="B6EGZ1"/>
<dbReference type="KEGG" id="vsa:VSAL_I0733"/>
<dbReference type="eggNOG" id="COG1160">
    <property type="taxonomic scope" value="Bacteria"/>
</dbReference>
<dbReference type="HOGENOM" id="CLU_016077_5_1_6"/>
<dbReference type="Proteomes" id="UP000001730">
    <property type="component" value="Chromosome 1"/>
</dbReference>
<dbReference type="GO" id="GO:0005525">
    <property type="term" value="F:GTP binding"/>
    <property type="evidence" value="ECO:0007669"/>
    <property type="project" value="UniProtKB-UniRule"/>
</dbReference>
<dbReference type="GO" id="GO:0043022">
    <property type="term" value="F:ribosome binding"/>
    <property type="evidence" value="ECO:0007669"/>
    <property type="project" value="TreeGrafter"/>
</dbReference>
<dbReference type="GO" id="GO:0042254">
    <property type="term" value="P:ribosome biogenesis"/>
    <property type="evidence" value="ECO:0007669"/>
    <property type="project" value="UniProtKB-KW"/>
</dbReference>
<dbReference type="CDD" id="cd01894">
    <property type="entry name" value="EngA1"/>
    <property type="match status" value="1"/>
</dbReference>
<dbReference type="CDD" id="cd01895">
    <property type="entry name" value="EngA2"/>
    <property type="match status" value="1"/>
</dbReference>
<dbReference type="FunFam" id="3.30.300.20:FF:000004">
    <property type="entry name" value="GTPase Der"/>
    <property type="match status" value="1"/>
</dbReference>
<dbReference type="FunFam" id="3.40.50.300:FF:000040">
    <property type="entry name" value="GTPase Der"/>
    <property type="match status" value="1"/>
</dbReference>
<dbReference type="FunFam" id="3.40.50.300:FF:000057">
    <property type="entry name" value="GTPase Der"/>
    <property type="match status" value="1"/>
</dbReference>
<dbReference type="Gene3D" id="3.30.300.20">
    <property type="match status" value="1"/>
</dbReference>
<dbReference type="Gene3D" id="3.40.50.300">
    <property type="entry name" value="P-loop containing nucleotide triphosphate hydrolases"/>
    <property type="match status" value="2"/>
</dbReference>
<dbReference type="HAMAP" id="MF_00195">
    <property type="entry name" value="GTPase_Der"/>
    <property type="match status" value="1"/>
</dbReference>
<dbReference type="InterPro" id="IPR031166">
    <property type="entry name" value="G_ENGA"/>
</dbReference>
<dbReference type="InterPro" id="IPR006073">
    <property type="entry name" value="GTP-bd"/>
</dbReference>
<dbReference type="InterPro" id="IPR016484">
    <property type="entry name" value="GTPase_Der"/>
</dbReference>
<dbReference type="InterPro" id="IPR032859">
    <property type="entry name" value="KH_dom-like"/>
</dbReference>
<dbReference type="InterPro" id="IPR015946">
    <property type="entry name" value="KH_dom-like_a/b"/>
</dbReference>
<dbReference type="InterPro" id="IPR027417">
    <property type="entry name" value="P-loop_NTPase"/>
</dbReference>
<dbReference type="InterPro" id="IPR005225">
    <property type="entry name" value="Small_GTP-bd"/>
</dbReference>
<dbReference type="NCBIfam" id="TIGR03594">
    <property type="entry name" value="GTPase_EngA"/>
    <property type="match status" value="1"/>
</dbReference>
<dbReference type="NCBIfam" id="TIGR00231">
    <property type="entry name" value="small_GTP"/>
    <property type="match status" value="2"/>
</dbReference>
<dbReference type="PANTHER" id="PTHR43834">
    <property type="entry name" value="GTPASE DER"/>
    <property type="match status" value="1"/>
</dbReference>
<dbReference type="PANTHER" id="PTHR43834:SF6">
    <property type="entry name" value="GTPASE DER"/>
    <property type="match status" value="1"/>
</dbReference>
<dbReference type="Pfam" id="PF14714">
    <property type="entry name" value="KH_dom-like"/>
    <property type="match status" value="1"/>
</dbReference>
<dbReference type="Pfam" id="PF01926">
    <property type="entry name" value="MMR_HSR1"/>
    <property type="match status" value="2"/>
</dbReference>
<dbReference type="PIRSF" id="PIRSF006485">
    <property type="entry name" value="GTP-binding_EngA"/>
    <property type="match status" value="1"/>
</dbReference>
<dbReference type="PRINTS" id="PR00326">
    <property type="entry name" value="GTP1OBG"/>
</dbReference>
<dbReference type="SUPFAM" id="SSF52540">
    <property type="entry name" value="P-loop containing nucleoside triphosphate hydrolases"/>
    <property type="match status" value="2"/>
</dbReference>
<dbReference type="PROSITE" id="PS51712">
    <property type="entry name" value="G_ENGA"/>
    <property type="match status" value="2"/>
</dbReference>
<comment type="function">
    <text evidence="1">GTPase that plays an essential role in the late steps of ribosome biogenesis.</text>
</comment>
<comment type="subunit">
    <text evidence="1">Associates with the 50S ribosomal subunit.</text>
</comment>
<comment type="similarity">
    <text evidence="1">Belongs to the TRAFAC class TrmE-Era-EngA-EngB-Septin-like GTPase superfamily. EngA (Der) GTPase family.</text>
</comment>
<organism>
    <name type="scientific">Aliivibrio salmonicida (strain LFI1238)</name>
    <name type="common">Vibrio salmonicida (strain LFI1238)</name>
    <dbReference type="NCBI Taxonomy" id="316275"/>
    <lineage>
        <taxon>Bacteria</taxon>
        <taxon>Pseudomonadati</taxon>
        <taxon>Pseudomonadota</taxon>
        <taxon>Gammaproteobacteria</taxon>
        <taxon>Vibrionales</taxon>
        <taxon>Vibrionaceae</taxon>
        <taxon>Aliivibrio</taxon>
    </lineage>
</organism>
<gene>
    <name evidence="1" type="primary">der</name>
    <name type="synonym">engA</name>
    <name type="ordered locus">VSAL_I0733</name>
</gene>
<feature type="chain" id="PRO_1000099087" description="GTPase Der">
    <location>
        <begin position="1"/>
        <end position="500"/>
    </location>
</feature>
<feature type="domain" description="EngA-type G 1">
    <location>
        <begin position="3"/>
        <end position="166"/>
    </location>
</feature>
<feature type="domain" description="EngA-type G 2">
    <location>
        <begin position="211"/>
        <end position="384"/>
    </location>
</feature>
<feature type="domain" description="KH-like" evidence="1">
    <location>
        <begin position="385"/>
        <end position="469"/>
    </location>
</feature>
<feature type="region of interest" description="Disordered" evidence="2">
    <location>
        <begin position="481"/>
        <end position="500"/>
    </location>
</feature>
<feature type="compositionally biased region" description="Basic residues" evidence="2">
    <location>
        <begin position="486"/>
        <end position="500"/>
    </location>
</feature>
<feature type="binding site" evidence="1">
    <location>
        <begin position="9"/>
        <end position="16"/>
    </location>
    <ligand>
        <name>GTP</name>
        <dbReference type="ChEBI" id="CHEBI:37565"/>
        <label>1</label>
    </ligand>
</feature>
<feature type="binding site" evidence="1">
    <location>
        <begin position="56"/>
        <end position="60"/>
    </location>
    <ligand>
        <name>GTP</name>
        <dbReference type="ChEBI" id="CHEBI:37565"/>
        <label>1</label>
    </ligand>
</feature>
<feature type="binding site" evidence="1">
    <location>
        <begin position="118"/>
        <end position="121"/>
    </location>
    <ligand>
        <name>GTP</name>
        <dbReference type="ChEBI" id="CHEBI:37565"/>
        <label>1</label>
    </ligand>
</feature>
<feature type="binding site" evidence="1">
    <location>
        <begin position="217"/>
        <end position="224"/>
    </location>
    <ligand>
        <name>GTP</name>
        <dbReference type="ChEBI" id="CHEBI:37565"/>
        <label>2</label>
    </ligand>
</feature>
<feature type="binding site" evidence="1">
    <location>
        <begin position="264"/>
        <end position="268"/>
    </location>
    <ligand>
        <name>GTP</name>
        <dbReference type="ChEBI" id="CHEBI:37565"/>
        <label>2</label>
    </ligand>
</feature>
<feature type="binding site" evidence="1">
    <location>
        <begin position="329"/>
        <end position="332"/>
    </location>
    <ligand>
        <name>GTP</name>
        <dbReference type="ChEBI" id="CHEBI:37565"/>
        <label>2</label>
    </ligand>
</feature>
<keyword id="KW-0342">GTP-binding</keyword>
<keyword id="KW-0547">Nucleotide-binding</keyword>
<keyword id="KW-0677">Repeat</keyword>
<keyword id="KW-0690">Ribosome biogenesis</keyword>
<evidence type="ECO:0000255" key="1">
    <source>
        <dbReference type="HAMAP-Rule" id="MF_00195"/>
    </source>
</evidence>
<evidence type="ECO:0000256" key="2">
    <source>
        <dbReference type="SAM" id="MobiDB-lite"/>
    </source>
</evidence>
<protein>
    <recommendedName>
        <fullName evidence="1">GTPase Der</fullName>
    </recommendedName>
    <alternativeName>
        <fullName evidence="1">GTP-binding protein EngA</fullName>
    </alternativeName>
</protein>
<name>DER_ALISL</name>